<sequence>METRGRRRAFSHQQDEPEENPGKRPTRSAPLYRHRNQPNANPATLERHYPCSTGRPPTGTVQPKPSQPPQPRSLLDRDAIDHITELWDRLYLLRQSLEKMTMADGLKPLKHFRSLEELLSLGGERLLQDLVKENQHVRSMMNEVTPLLREDGSCISLNYQLQPVIGVIYGPTGCGKSQLLRNLLSTQLINPPPETVFFIAPQVDMIPPSEIKAWEMQICEGNYAPGPEGTIIPQSGTLLPRFIKMAYDELTLEQNYDVSHPDNIFAKAASQGPIAIIMDECMENLGGHKGVSKFFHAFPSKLHDKFPKCTGYTVLVVLHNMNPRRDLGGNIANLKIQAKMHLISPRMHPSQLNRFVNTFTKGLPLAISLLLKDIFQFHAQKPCYDWIIYNTTPEHDALQWSYLHPRDGLMPMYLNIQAHLYRVLENIHKVLNDRDRWSRAYRKRNK</sequence>
<accession>P48752</accession>
<reference key="1">
    <citation type="journal article" date="1993" name="J. Mol. Biol.">
        <title>The DNA sequence of adenovirus type 40.</title>
        <authorList>
            <person name="Davison A.J."/>
            <person name="Telford E.A."/>
            <person name="Watson M.S."/>
            <person name="McBride K."/>
            <person name="Mautner V."/>
        </authorList>
    </citation>
    <scope>NUCLEOTIDE SEQUENCE [LARGE SCALE GENOMIC DNA]</scope>
    <source>
        <strain>Dugan</strain>
    </source>
</reference>
<keyword id="KW-0010">Activator</keyword>
<keyword id="KW-0067">ATP-binding</keyword>
<keyword id="KW-0238">DNA-binding</keyword>
<keyword id="KW-1048">Host nucleus</keyword>
<keyword id="KW-0547">Nucleotide-binding</keyword>
<keyword id="KW-0597">Phosphoprotein</keyword>
<keyword id="KW-1185">Reference proteome</keyword>
<keyword id="KW-0804">Transcription</keyword>
<keyword id="KW-0805">Transcription regulation</keyword>
<keyword id="KW-0231">Viral genome packaging</keyword>
<keyword id="KW-1188">Viral release from host cell</keyword>
<keyword id="KW-0946">Virion</keyword>
<comment type="function">
    <text evidence="1">Component of the packaging machinery which encapsidates the viral DNA into preformed capsids and transcriptional activator of the viral major late promoter (MLP). Binds, along with packaging proteins 2 and 3, to the specific packaging sequence on the left end of viral genomic DNA and displays ATPase activity thereby providing the power stroke of the packaging machinery. The activity of packaging protein IVa2 is stimulated by protein 33K which acts as a terminase. May be the protein that pumps DNA into the capsid powered by ATP hydrolysis. Specifically binds to the 5'-CG-3' nucleotides of the repeats making up the packaging sequence. Component of the DEF-A and DEF-B transcription factors that bind downstream elements of the major late promoter (MLP), and stimulate transcription from the MLP after initiation of viral DNA replication. DEF-A is a heterodimer packaging proteins 1 and 2 and DEF-B is a homodimer of packaging protein 1.</text>
</comment>
<comment type="subunit">
    <text evidence="1">Homodimer. Part of a genome packaging complex composed of packaging proteins 1, 2 and 3; this complex specifically binds to the packaging sequence on the left end of viral genomic DNA and performs packaging of the viral genome. Interacts with protein 33K.</text>
</comment>
<comment type="subcellular location">
    <subcellularLocation>
        <location evidence="1">Virion</location>
    </subcellularLocation>
    <subcellularLocation>
        <location evidence="1">Host nucleus</location>
        <location evidence="1">Host nucleoplasm</location>
    </subcellularLocation>
    <subcellularLocation>
        <location evidence="1">Host nucleus</location>
        <location evidence="1">Host nucleolus</location>
    </subcellularLocation>
    <text evidence="1">Located at a unique vertex of the capsid. Present in about 6-8 copies per virion.</text>
</comment>
<comment type="induction">
    <text evidence="1">Expressed in the intermediate phase of the viral replicative cycle.</text>
</comment>
<comment type="similarity">
    <text evidence="1">Belongs to the adenoviridae packaging protein 1 family.</text>
</comment>
<protein>
    <recommendedName>
        <fullName evidence="1">Packaging protein 1</fullName>
    </recommendedName>
    <alternativeName>
        <fullName evidence="1">Packaging protein IVa2</fullName>
    </alternativeName>
</protein>
<gene>
    <name evidence="1" type="primary">IVa2</name>
</gene>
<organism>
    <name type="scientific">Human adenovirus F serotype 40</name>
    <name type="common">HAdV-40</name>
    <name type="synonym">Human adenovirus 40</name>
    <dbReference type="NCBI Taxonomy" id="28284"/>
    <lineage>
        <taxon>Viruses</taxon>
        <taxon>Varidnaviria</taxon>
        <taxon>Bamfordvirae</taxon>
        <taxon>Preplasmiviricota</taxon>
        <taxon>Tectiliviricetes</taxon>
        <taxon>Rowavirales</taxon>
        <taxon>Adenoviridae</taxon>
        <taxon>Mastadenovirus</taxon>
        <taxon>Human mastadenovirus F</taxon>
    </lineage>
</organism>
<organismHost>
    <name type="scientific">Homo sapiens</name>
    <name type="common">Human</name>
    <dbReference type="NCBI Taxonomy" id="9606"/>
</organismHost>
<proteinExistence type="inferred from homology"/>
<feature type="chain" id="PRO_0000221887" description="Packaging protein 1">
    <location>
        <begin position="1"/>
        <end position="446"/>
    </location>
</feature>
<feature type="region of interest" description="Disordered" evidence="2">
    <location>
        <begin position="1"/>
        <end position="74"/>
    </location>
</feature>
<feature type="region of interest" description="DNA-binding" evidence="1">
    <location>
        <begin position="439"/>
        <end position="446"/>
    </location>
</feature>
<feature type="compositionally biased region" description="Basic residues" evidence="2">
    <location>
        <begin position="1"/>
        <end position="10"/>
    </location>
</feature>
<feature type="binding site" evidence="1">
    <location>
        <begin position="170"/>
        <end position="177"/>
    </location>
    <ligand>
        <name>ATP</name>
        <dbReference type="ChEBI" id="CHEBI:30616"/>
    </ligand>
</feature>
<evidence type="ECO:0000255" key="1">
    <source>
        <dbReference type="HAMAP-Rule" id="MF_04057"/>
    </source>
</evidence>
<evidence type="ECO:0000256" key="2">
    <source>
        <dbReference type="SAM" id="MobiDB-lite"/>
    </source>
</evidence>
<name>PKG1_ADE40</name>
<dbReference type="EMBL" id="L19443">
    <property type="protein sequence ID" value="AAC13952.1"/>
    <property type="molecule type" value="Genomic_DNA"/>
</dbReference>
<dbReference type="RefSeq" id="NP_040852.1">
    <property type="nucleotide sequence ID" value="NC_001454.1"/>
</dbReference>
<dbReference type="GeneID" id="2715937"/>
<dbReference type="KEGG" id="vg:2715937"/>
<dbReference type="Proteomes" id="UP000151954">
    <property type="component" value="Segment"/>
</dbReference>
<dbReference type="GO" id="GO:0044196">
    <property type="term" value="C:host cell nucleolus"/>
    <property type="evidence" value="ECO:0007669"/>
    <property type="project" value="UniProtKB-SubCell"/>
</dbReference>
<dbReference type="GO" id="GO:0044095">
    <property type="term" value="C:host cell nucleoplasm"/>
    <property type="evidence" value="ECO:0007669"/>
    <property type="project" value="UniProtKB-SubCell"/>
</dbReference>
<dbReference type="GO" id="GO:0044423">
    <property type="term" value="C:virion component"/>
    <property type="evidence" value="ECO:0007669"/>
    <property type="project" value="UniProtKB-UniRule"/>
</dbReference>
<dbReference type="GO" id="GO:0005524">
    <property type="term" value="F:ATP binding"/>
    <property type="evidence" value="ECO:0007669"/>
    <property type="project" value="UniProtKB-UniRule"/>
</dbReference>
<dbReference type="GO" id="GO:0003677">
    <property type="term" value="F:DNA binding"/>
    <property type="evidence" value="ECO:0007669"/>
    <property type="project" value="UniProtKB-UniRule"/>
</dbReference>
<dbReference type="GO" id="GO:0006351">
    <property type="term" value="P:DNA-templated transcription"/>
    <property type="evidence" value="ECO:0007669"/>
    <property type="project" value="UniProtKB-UniRule"/>
</dbReference>
<dbReference type="GO" id="GO:0039708">
    <property type="term" value="P:nuclear capsid assembly"/>
    <property type="evidence" value="ECO:0007669"/>
    <property type="project" value="UniProtKB-UniRule"/>
</dbReference>
<dbReference type="GO" id="GO:0006355">
    <property type="term" value="P:regulation of DNA-templated transcription"/>
    <property type="evidence" value="ECO:0007669"/>
    <property type="project" value="UniProtKB-UniRule"/>
</dbReference>
<dbReference type="GO" id="GO:0098035">
    <property type="term" value="P:viral DNA genome packaging via site-specific sequence recognition"/>
    <property type="evidence" value="ECO:0007669"/>
    <property type="project" value="UniProtKB-UniRule"/>
</dbReference>
<dbReference type="GO" id="GO:0019076">
    <property type="term" value="P:viral release from host cell"/>
    <property type="evidence" value="ECO:0007669"/>
    <property type="project" value="UniProtKB-UniRule"/>
</dbReference>
<dbReference type="GO" id="GO:0019083">
    <property type="term" value="P:viral transcription"/>
    <property type="evidence" value="ECO:0007669"/>
    <property type="project" value="UniProtKB-UniRule"/>
</dbReference>
<dbReference type="HAMAP" id="MF_04057">
    <property type="entry name" value="ADV_PKG1"/>
    <property type="match status" value="1"/>
</dbReference>
<dbReference type="InterPro" id="IPR003389">
    <property type="entry name" value="Adeno_IVa2"/>
</dbReference>
<dbReference type="InterPro" id="IPR027417">
    <property type="entry name" value="P-loop_NTPase"/>
</dbReference>
<dbReference type="Pfam" id="PF02456">
    <property type="entry name" value="Adeno_IVa2"/>
    <property type="match status" value="1"/>
</dbReference>
<dbReference type="SUPFAM" id="SSF52540">
    <property type="entry name" value="P-loop containing nucleoside triphosphate hydrolases"/>
    <property type="match status" value="1"/>
</dbReference>